<protein>
    <recommendedName>
        <fullName>Eisosome protein 1</fullName>
    </recommendedName>
</protein>
<accession>B5VPF9</accession>
<proteinExistence type="inferred from homology"/>
<reference key="1">
    <citation type="journal article" date="2008" name="FEMS Yeast Res.">
        <title>Comparative genome analysis of a Saccharomyces cerevisiae wine strain.</title>
        <authorList>
            <person name="Borneman A.R."/>
            <person name="Forgan A.H."/>
            <person name="Pretorius I.S."/>
            <person name="Chambers P.J."/>
        </authorList>
    </citation>
    <scope>NUCLEOTIDE SEQUENCE [LARGE SCALE GENOMIC DNA]</scope>
    <source>
        <strain>AWRI1631</strain>
    </source>
</reference>
<name>EIS1_YEAS6</name>
<sequence>MSLISAVEDRDIHNIGKTSGGGSRTSSITSSKKSLKHGSKSLRKPKVYQTTGELLSREALYKAKLKYGVYQSPAQSYSIGVSDAHAASDKAANLAHDNQTTVEAYKRMFIDPNATKAASKMGPKVVRNNSITSATSKTSKESQTKRKSKESPGAAASKAYSMTMETTSLSSQTNSRSYSITSASSVLSGASGSFNSTVNPKPKTLNLEKVLVGAEKKAESRIKERWEPEKTNFQYGVKTDEHGNLNQFSFSNEMMNNIMAKVDAPKAQDLQKVKKVSAEKEAKSMKFALGAANAVKDMHPGEDIDKSIALKAQKRETYLSQLTSQQVLTLARANVDRQLDIIEKSDMHRKLFTNMEYNKAAVAVAQSNHQKKTEFHNKINMGGGLFLSPEDITKIASGLISPVLGEVSERAEAQRAMDEEIAERTEAYNKSLNEWETMERSIISNDAKVLTTTANRHQTEKKTSQEKIKASFDALVARMDTKVAERETLLEDTKSKEIEFKKQMQQELKDEKARLDQDLEEWGKKCEQDITEARKEQEELLKPYHDDLANAEAEHKTLVEERDEINAEISRLQDAIVDHKRKISGYGNDLDAQKNRNIREDDKLLELGQTKESLESHLNDDVIILANKAKEQAELSTKEARLKQLEVDSLINERKSELNATEIELKKEKLNLLEAMKDVASARGDDKIDEEKVKKLIGMTSEEYLTQNKSVEKNVEDLPTQLEKIEEGDELKKEEIVGAETKNSGGDGVPVSTAAKEATETSSAVQTKEPEEKISIGNKSSGKEDANDCKSAEHSKEISVSQKAGNNKSLGVSPDSLEHTFSGFSQGSSIEDDQDAISNQEKK</sequence>
<comment type="function">
    <text evidence="1">Required for normal formation of eisosomes, large cytoplasmic protein assemblies that localize to specialized domains on plasma membrane and mark the site of endocytosis.</text>
</comment>
<comment type="subcellular location">
    <subcellularLocation>
        <location evidence="1">Cytoplasmic granule</location>
    </subcellularLocation>
    <subcellularLocation>
        <location evidence="1">Cell membrane</location>
        <topology evidence="1">Peripheral membrane protein</topology>
        <orientation evidence="1">Cytoplasmic side</orientation>
    </subcellularLocation>
    <text evidence="1">Localizes at the eisosomes.</text>
</comment>
<comment type="similarity">
    <text evidence="4">Belongs to the EIS1 family.</text>
</comment>
<organism>
    <name type="scientific">Saccharomyces cerevisiae (strain AWRI1631)</name>
    <name type="common">Baker's yeast</name>
    <dbReference type="NCBI Taxonomy" id="545124"/>
    <lineage>
        <taxon>Eukaryota</taxon>
        <taxon>Fungi</taxon>
        <taxon>Dikarya</taxon>
        <taxon>Ascomycota</taxon>
        <taxon>Saccharomycotina</taxon>
        <taxon>Saccharomycetes</taxon>
        <taxon>Saccharomycetales</taxon>
        <taxon>Saccharomycetaceae</taxon>
        <taxon>Saccharomyces</taxon>
    </lineage>
</organism>
<gene>
    <name type="primary">EIS1</name>
    <name type="ORF">AWRI1631_131720</name>
</gene>
<dbReference type="EMBL" id="ABSV01001803">
    <property type="protein sequence ID" value="EDZ70183.1"/>
    <property type="molecule type" value="Genomic_DNA"/>
</dbReference>
<dbReference type="SMR" id="B5VPF9"/>
<dbReference type="Proteomes" id="UP000008988">
    <property type="component" value="Unassembled WGS sequence"/>
</dbReference>
<dbReference type="GO" id="GO:0005886">
    <property type="term" value="C:plasma membrane"/>
    <property type="evidence" value="ECO:0007669"/>
    <property type="project" value="UniProtKB-SubCell"/>
</dbReference>
<dbReference type="GO" id="GO:0070941">
    <property type="term" value="P:eisosome assembly"/>
    <property type="evidence" value="ECO:0007669"/>
    <property type="project" value="TreeGrafter"/>
</dbReference>
<dbReference type="InterPro" id="IPR024527">
    <property type="entry name" value="Eisosome1"/>
</dbReference>
<dbReference type="PANTHER" id="PTHR28298">
    <property type="entry name" value="EISOSOME PROTEIN 1"/>
    <property type="match status" value="1"/>
</dbReference>
<dbReference type="PANTHER" id="PTHR28298:SF1">
    <property type="entry name" value="EISOSOME PROTEIN 1"/>
    <property type="match status" value="1"/>
</dbReference>
<dbReference type="Pfam" id="PF12757">
    <property type="entry name" value="Eisosome1"/>
    <property type="match status" value="1"/>
</dbReference>
<feature type="initiator methionine" description="Removed" evidence="2">
    <location>
        <position position="1"/>
    </location>
</feature>
<feature type="chain" id="PRO_0000410804" description="Eisosome protein 1">
    <location>
        <begin position="2"/>
        <end position="843"/>
    </location>
</feature>
<feature type="region of interest" description="Disordered" evidence="3">
    <location>
        <begin position="13"/>
        <end position="44"/>
    </location>
</feature>
<feature type="region of interest" description="Disordered" evidence="3">
    <location>
        <begin position="120"/>
        <end position="174"/>
    </location>
</feature>
<feature type="region of interest" description="Disordered" evidence="3">
    <location>
        <begin position="717"/>
        <end position="843"/>
    </location>
</feature>
<feature type="compositionally biased region" description="Basic residues" evidence="3">
    <location>
        <begin position="33"/>
        <end position="44"/>
    </location>
</feature>
<feature type="compositionally biased region" description="Polar residues" evidence="3">
    <location>
        <begin position="127"/>
        <end position="137"/>
    </location>
</feature>
<feature type="compositionally biased region" description="Polar residues" evidence="3">
    <location>
        <begin position="163"/>
        <end position="174"/>
    </location>
</feature>
<feature type="compositionally biased region" description="Low complexity" evidence="3">
    <location>
        <begin position="752"/>
        <end position="764"/>
    </location>
</feature>
<feature type="compositionally biased region" description="Basic and acidic residues" evidence="3">
    <location>
        <begin position="781"/>
        <end position="797"/>
    </location>
</feature>
<feature type="compositionally biased region" description="Polar residues" evidence="3">
    <location>
        <begin position="798"/>
        <end position="810"/>
    </location>
</feature>
<feature type="modified residue" description="N-acetylserine" evidence="2">
    <location>
        <position position="2"/>
    </location>
</feature>
<feature type="modified residue" description="Phosphoserine" evidence="2">
    <location>
        <position position="2"/>
    </location>
</feature>
<feature type="modified residue" description="Phosphoserine" evidence="2">
    <location>
        <position position="88"/>
    </location>
</feature>
<feature type="modified residue" description="Phosphoserine" evidence="2">
    <location>
        <position position="130"/>
    </location>
</feature>
<feature type="modified residue" description="Phosphoserine" evidence="2">
    <location>
        <position position="182"/>
    </location>
</feature>
<feature type="modified residue" description="Phosphoserine" evidence="2">
    <location>
        <position position="401"/>
    </location>
</feature>
<feature type="modified residue" description="Phosphoserine" evidence="2">
    <location>
        <position position="584"/>
    </location>
</feature>
<feature type="modified residue" description="Phosphoserine" evidence="2">
    <location>
        <position position="710"/>
    </location>
</feature>
<feature type="modified residue" description="Phosphothreonine" evidence="2">
    <location>
        <position position="720"/>
    </location>
</feature>
<feature type="modified residue" description="Phosphoserine" evidence="2">
    <location>
        <position position="763"/>
    </location>
</feature>
<feature type="modified residue" description="Phosphoserine" evidence="2">
    <location>
        <position position="775"/>
    </location>
</feature>
<feature type="modified residue" description="Phosphoserine" evidence="2">
    <location>
        <position position="816"/>
    </location>
</feature>
<feature type="modified residue" description="Phosphoserine" evidence="2">
    <location>
        <position position="828"/>
    </location>
</feature>
<feature type="modified residue" description="Phosphoserine" evidence="2">
    <location>
        <position position="829"/>
    </location>
</feature>
<feature type="modified residue" description="Phosphoserine" evidence="2">
    <location>
        <position position="838"/>
    </location>
</feature>
<evidence type="ECO:0000250" key="1"/>
<evidence type="ECO:0000250" key="2">
    <source>
        <dbReference type="UniProtKB" id="Q05050"/>
    </source>
</evidence>
<evidence type="ECO:0000256" key="3">
    <source>
        <dbReference type="SAM" id="MobiDB-lite"/>
    </source>
</evidence>
<evidence type="ECO:0000305" key="4"/>
<keyword id="KW-0007">Acetylation</keyword>
<keyword id="KW-1003">Cell membrane</keyword>
<keyword id="KW-0472">Membrane</keyword>
<keyword id="KW-0597">Phosphoprotein</keyword>